<reference key="1">
    <citation type="submission" date="2009-01" db="EMBL/GenBank/DDBJ databases">
        <title>Complete sequence of Chloroflexus sp. Y-400-fl.</title>
        <authorList>
            <consortium name="US DOE Joint Genome Institute"/>
            <person name="Lucas S."/>
            <person name="Copeland A."/>
            <person name="Lapidus A."/>
            <person name="Glavina del Rio T."/>
            <person name="Dalin E."/>
            <person name="Tice H."/>
            <person name="Bruce D."/>
            <person name="Goodwin L."/>
            <person name="Pitluck S."/>
            <person name="Sims D."/>
            <person name="Kiss H."/>
            <person name="Brettin T."/>
            <person name="Detter J.C."/>
            <person name="Han C."/>
            <person name="Larimer F."/>
            <person name="Land M."/>
            <person name="Hauser L."/>
            <person name="Kyrpides N."/>
            <person name="Ovchinnikova G."/>
            <person name="Bryant D.A."/>
            <person name="Richardson P."/>
        </authorList>
    </citation>
    <scope>NUCLEOTIDE SEQUENCE [LARGE SCALE GENOMIC DNA]</scope>
    <source>
        <strain>ATCC 29364 / DSM 637 / Y-400-fl</strain>
    </source>
</reference>
<dbReference type="EMBL" id="CP001364">
    <property type="protein sequence ID" value="ACM53966.1"/>
    <property type="molecule type" value="Genomic_DNA"/>
</dbReference>
<dbReference type="SMR" id="B9LJF0"/>
<dbReference type="KEGG" id="chl:Chy400_2574"/>
<dbReference type="HOGENOM" id="CLU_131047_2_0_0"/>
<dbReference type="OrthoDB" id="9812790at2"/>
<dbReference type="GO" id="GO:0022625">
    <property type="term" value="C:cytosolic large ribosomal subunit"/>
    <property type="evidence" value="ECO:0007669"/>
    <property type="project" value="TreeGrafter"/>
</dbReference>
<dbReference type="GO" id="GO:0003735">
    <property type="term" value="F:structural constituent of ribosome"/>
    <property type="evidence" value="ECO:0007669"/>
    <property type="project" value="InterPro"/>
</dbReference>
<dbReference type="GO" id="GO:0006412">
    <property type="term" value="P:translation"/>
    <property type="evidence" value="ECO:0007669"/>
    <property type="project" value="UniProtKB-UniRule"/>
</dbReference>
<dbReference type="CDD" id="cd01658">
    <property type="entry name" value="Ribosomal_L30"/>
    <property type="match status" value="1"/>
</dbReference>
<dbReference type="FunFam" id="3.30.1390.20:FF:000001">
    <property type="entry name" value="50S ribosomal protein L30"/>
    <property type="match status" value="1"/>
</dbReference>
<dbReference type="Gene3D" id="3.30.1390.20">
    <property type="entry name" value="Ribosomal protein L30, ferredoxin-like fold domain"/>
    <property type="match status" value="1"/>
</dbReference>
<dbReference type="HAMAP" id="MF_01371_B">
    <property type="entry name" value="Ribosomal_uL30_B"/>
    <property type="match status" value="1"/>
</dbReference>
<dbReference type="InterPro" id="IPR036919">
    <property type="entry name" value="Ribo_uL30_ferredoxin-like_sf"/>
</dbReference>
<dbReference type="InterPro" id="IPR005996">
    <property type="entry name" value="Ribosomal_uL30_bac-type"/>
</dbReference>
<dbReference type="InterPro" id="IPR018038">
    <property type="entry name" value="Ribosomal_uL30_CS"/>
</dbReference>
<dbReference type="InterPro" id="IPR016082">
    <property type="entry name" value="Ribosomal_uL30_ferredoxin-like"/>
</dbReference>
<dbReference type="NCBIfam" id="TIGR01308">
    <property type="entry name" value="rpmD_bact"/>
    <property type="match status" value="1"/>
</dbReference>
<dbReference type="PANTHER" id="PTHR15892:SF2">
    <property type="entry name" value="LARGE RIBOSOMAL SUBUNIT PROTEIN UL30M"/>
    <property type="match status" value="1"/>
</dbReference>
<dbReference type="PANTHER" id="PTHR15892">
    <property type="entry name" value="MITOCHONDRIAL RIBOSOMAL PROTEIN L30"/>
    <property type="match status" value="1"/>
</dbReference>
<dbReference type="Pfam" id="PF00327">
    <property type="entry name" value="Ribosomal_L30"/>
    <property type="match status" value="1"/>
</dbReference>
<dbReference type="PIRSF" id="PIRSF002211">
    <property type="entry name" value="Ribosomal_L30_bac-type"/>
    <property type="match status" value="1"/>
</dbReference>
<dbReference type="SUPFAM" id="SSF55129">
    <property type="entry name" value="Ribosomal protein L30p/L7e"/>
    <property type="match status" value="1"/>
</dbReference>
<dbReference type="PROSITE" id="PS00634">
    <property type="entry name" value="RIBOSOMAL_L30"/>
    <property type="match status" value="1"/>
</dbReference>
<protein>
    <recommendedName>
        <fullName evidence="1">Large ribosomal subunit protein uL30</fullName>
    </recommendedName>
    <alternativeName>
        <fullName evidence="2">50S ribosomal protein L30</fullName>
    </alternativeName>
</protein>
<comment type="subunit">
    <text evidence="1">Part of the 50S ribosomal subunit.</text>
</comment>
<comment type="similarity">
    <text evidence="1">Belongs to the universal ribosomal protein uL30 family.</text>
</comment>
<sequence length="65" mass="7325">MGKLRVTYVKSAIGYARDQKETLAALGLRRLNQSVLKPDNPSVRGMLFKVQHLVKVEEVEDEVQA</sequence>
<organism>
    <name type="scientific">Chloroflexus aurantiacus (strain ATCC 29364 / DSM 637 / Y-400-fl)</name>
    <dbReference type="NCBI Taxonomy" id="480224"/>
    <lineage>
        <taxon>Bacteria</taxon>
        <taxon>Bacillati</taxon>
        <taxon>Chloroflexota</taxon>
        <taxon>Chloroflexia</taxon>
        <taxon>Chloroflexales</taxon>
        <taxon>Chloroflexineae</taxon>
        <taxon>Chloroflexaceae</taxon>
        <taxon>Chloroflexus</taxon>
    </lineage>
</organism>
<accession>B9LJF0</accession>
<gene>
    <name evidence="1" type="primary">rpmD</name>
    <name type="ordered locus">Chy400_2574</name>
</gene>
<name>RL30_CHLSY</name>
<evidence type="ECO:0000255" key="1">
    <source>
        <dbReference type="HAMAP-Rule" id="MF_01371"/>
    </source>
</evidence>
<evidence type="ECO:0000305" key="2"/>
<keyword id="KW-0687">Ribonucleoprotein</keyword>
<keyword id="KW-0689">Ribosomal protein</keyword>
<proteinExistence type="inferred from homology"/>
<feature type="chain" id="PRO_1000184134" description="Large ribosomal subunit protein uL30">
    <location>
        <begin position="1"/>
        <end position="65"/>
    </location>
</feature>